<dbReference type="EMBL" id="X15586">
    <property type="protein sequence ID" value="CAA33611.1"/>
    <property type="status" value="ALT_FRAME"/>
    <property type="molecule type" value="mRNA"/>
</dbReference>
<dbReference type="EMBL" id="AE014296">
    <property type="protein sequence ID" value="AAF49282.3"/>
    <property type="molecule type" value="Genomic_DNA"/>
</dbReference>
<dbReference type="PIR" id="S05979">
    <property type="entry name" value="S05979"/>
</dbReference>
<dbReference type="RefSeq" id="NP_001246821.1">
    <molecule id="P13055-2"/>
    <property type="nucleotide sequence ID" value="NM_001259892.1"/>
</dbReference>
<dbReference type="RefSeq" id="NP_001246822.1">
    <molecule id="P13055-2"/>
    <property type="nucleotide sequence ID" value="NM_001259893.2"/>
</dbReference>
<dbReference type="RefSeq" id="NP_730321.1">
    <molecule id="P13055-2"/>
    <property type="nucleotide sequence ID" value="NM_168755.1"/>
</dbReference>
<dbReference type="SMR" id="P13055"/>
<dbReference type="BioGRID" id="65284">
    <property type="interactions" value="19"/>
</dbReference>
<dbReference type="FunCoup" id="P13055">
    <property type="interactions" value="378"/>
</dbReference>
<dbReference type="IntAct" id="P13055">
    <property type="interactions" value="9"/>
</dbReference>
<dbReference type="STRING" id="7227.FBpp0297726"/>
<dbReference type="GlyGen" id="P13055">
    <property type="glycosylation" value="3 sites"/>
</dbReference>
<dbReference type="PaxDb" id="7227-FBpp0297726"/>
<dbReference type="DNASU" id="39999"/>
<dbReference type="EnsemblMetazoa" id="FBtr0075148">
    <molecule id="P13055-2"/>
    <property type="protein sequence ID" value="FBpp0074914"/>
    <property type="gene ID" value="FBgn0000568"/>
</dbReference>
<dbReference type="EnsemblMetazoa" id="FBtr0306813">
    <molecule id="P13055-2"/>
    <property type="protein sequence ID" value="FBpp0297725"/>
    <property type="gene ID" value="FBgn0000568"/>
</dbReference>
<dbReference type="EnsemblMetazoa" id="FBtr0306814">
    <molecule id="P13055-2"/>
    <property type="protein sequence ID" value="FBpp0297726"/>
    <property type="gene ID" value="FBgn0000568"/>
</dbReference>
<dbReference type="GeneID" id="39999"/>
<dbReference type="KEGG" id="dme:Dmel_CG8127"/>
<dbReference type="AGR" id="FB:FBgn0000568"/>
<dbReference type="CTD" id="39999"/>
<dbReference type="FlyBase" id="FBgn0000568">
    <property type="gene designation" value="Eip75B"/>
</dbReference>
<dbReference type="VEuPathDB" id="VectorBase:FBgn0000568"/>
<dbReference type="eggNOG" id="KOG3575">
    <property type="taxonomic scope" value="Eukaryota"/>
</dbReference>
<dbReference type="InParanoid" id="P13055"/>
<dbReference type="OMA" id="IVRHHQQ"/>
<dbReference type="OrthoDB" id="7634782at2759"/>
<dbReference type="PhylomeDB" id="P13055"/>
<dbReference type="Reactome" id="R-DME-200425">
    <property type="pathway name" value="Carnitine shuttle"/>
</dbReference>
<dbReference type="Reactome" id="R-DME-381340">
    <property type="pathway name" value="Transcriptional regulation of white adipocyte differentiation"/>
</dbReference>
<dbReference type="Reactome" id="R-DME-383280">
    <property type="pathway name" value="Nuclear Receptor transcription pathway"/>
</dbReference>
<dbReference type="Reactome" id="R-DME-400206">
    <property type="pathway name" value="Regulation of lipid metabolism by PPARalpha"/>
</dbReference>
<dbReference type="Reactome" id="R-DME-4090294">
    <property type="pathway name" value="SUMOylation of intracellular receptors"/>
</dbReference>
<dbReference type="Reactome" id="R-DME-5362517">
    <property type="pathway name" value="Signaling by Retinoic Acid"/>
</dbReference>
<dbReference type="Reactome" id="R-DME-9616222">
    <property type="pathway name" value="Transcriptional regulation of granulopoiesis"/>
</dbReference>
<dbReference type="Reactome" id="R-DME-9707564">
    <property type="pathway name" value="Cytoprotection by HMOX1"/>
</dbReference>
<dbReference type="Reactome" id="R-DME-9841922">
    <property type="pathway name" value="MLL4 and MLL3 complexes regulate expression of PPARG target genes in adipogenesis and hepatic steatosis"/>
</dbReference>
<dbReference type="SignaLink" id="P13055"/>
<dbReference type="BioGRID-ORCS" id="39999">
    <property type="hits" value="1 hit in 3 CRISPR screens"/>
</dbReference>
<dbReference type="ChiTaRS" id="Eip75B">
    <property type="organism name" value="fly"/>
</dbReference>
<dbReference type="GenomeRNAi" id="39999"/>
<dbReference type="Proteomes" id="UP000000803">
    <property type="component" value="Chromosome 3L"/>
</dbReference>
<dbReference type="Bgee" id="FBgn0000568">
    <property type="expression patterns" value="Expressed in epithelial cell in haltere and 290 other cell types or tissues"/>
</dbReference>
<dbReference type="ExpressionAtlas" id="P13055">
    <property type="expression patterns" value="baseline and differential"/>
</dbReference>
<dbReference type="GO" id="GO:0005634">
    <property type="term" value="C:nucleus"/>
    <property type="evidence" value="ECO:0000314"/>
    <property type="project" value="FlyBase"/>
</dbReference>
<dbReference type="GO" id="GO:0003677">
    <property type="term" value="F:DNA binding"/>
    <property type="evidence" value="ECO:0000314"/>
    <property type="project" value="FlyBase"/>
</dbReference>
<dbReference type="GO" id="GO:0020037">
    <property type="term" value="F:heme binding"/>
    <property type="evidence" value="ECO:0000314"/>
    <property type="project" value="FlyBase"/>
</dbReference>
<dbReference type="GO" id="GO:0004879">
    <property type="term" value="F:nuclear receptor activity"/>
    <property type="evidence" value="ECO:0000318"/>
    <property type="project" value="GO_Central"/>
</dbReference>
<dbReference type="GO" id="GO:0000978">
    <property type="term" value="F:RNA polymerase II cis-regulatory region sequence-specific DNA binding"/>
    <property type="evidence" value="ECO:0000318"/>
    <property type="project" value="GO_Central"/>
</dbReference>
<dbReference type="GO" id="GO:0008270">
    <property type="term" value="F:zinc ion binding"/>
    <property type="evidence" value="ECO:0007669"/>
    <property type="project" value="UniProtKB-KW"/>
</dbReference>
<dbReference type="GO" id="GO:0030154">
    <property type="term" value="P:cell differentiation"/>
    <property type="evidence" value="ECO:0000318"/>
    <property type="project" value="GO_Central"/>
</dbReference>
<dbReference type="GO" id="GO:0018990">
    <property type="term" value="P:ecdysis, chitin-based cuticle"/>
    <property type="evidence" value="ECO:0000315"/>
    <property type="project" value="FlyBase"/>
</dbReference>
<dbReference type="GO" id="GO:0009755">
    <property type="term" value="P:hormone-mediated signaling pathway"/>
    <property type="evidence" value="ECO:0000318"/>
    <property type="project" value="GO_Central"/>
</dbReference>
<dbReference type="GO" id="GO:0030522">
    <property type="term" value="P:intracellular receptor signaling pathway"/>
    <property type="evidence" value="ECO:0000318"/>
    <property type="project" value="GO_Central"/>
</dbReference>
<dbReference type="GO" id="GO:0007591">
    <property type="term" value="P:molting cycle, chitin-based cuticle"/>
    <property type="evidence" value="ECO:0000315"/>
    <property type="project" value="FlyBase"/>
</dbReference>
<dbReference type="GO" id="GO:0061060">
    <property type="term" value="P:negative regulation of peptidoglycan recognition protein signaling pathway"/>
    <property type="evidence" value="ECO:0000315"/>
    <property type="project" value="FlyBase"/>
</dbReference>
<dbReference type="GO" id="GO:0000122">
    <property type="term" value="P:negative regulation of transcription by RNA polymerase II"/>
    <property type="evidence" value="ECO:0000250"/>
    <property type="project" value="FlyBase"/>
</dbReference>
<dbReference type="GO" id="GO:0048477">
    <property type="term" value="P:oogenesis"/>
    <property type="evidence" value="ECO:0000303"/>
    <property type="project" value="FlyBase"/>
</dbReference>
<dbReference type="GO" id="GO:0045944">
    <property type="term" value="P:positive regulation of transcription by RNA polymerase II"/>
    <property type="evidence" value="ECO:0000318"/>
    <property type="project" value="GO_Central"/>
</dbReference>
<dbReference type="GO" id="GO:0007553">
    <property type="term" value="P:regulation of ecdysteroid metabolic process"/>
    <property type="evidence" value="ECO:0000315"/>
    <property type="project" value="FlyBase"/>
</dbReference>
<dbReference type="GO" id="GO:0010468">
    <property type="term" value="P:regulation of gene expression"/>
    <property type="evidence" value="ECO:0000314"/>
    <property type="project" value="FlyBase"/>
</dbReference>
<dbReference type="GO" id="GO:0035075">
    <property type="term" value="P:response to ecdysone"/>
    <property type="evidence" value="ECO:0000315"/>
    <property type="project" value="FlyBase"/>
</dbReference>
<dbReference type="CDD" id="cd07166">
    <property type="entry name" value="NR_DBD_REV_ERB"/>
    <property type="match status" value="1"/>
</dbReference>
<dbReference type="CDD" id="cd06940">
    <property type="entry name" value="NR_LBD_REV_ERB"/>
    <property type="match status" value="1"/>
</dbReference>
<dbReference type="FunFam" id="1.10.565.10:FF:000029">
    <property type="entry name" value="Ecdysone-induced protein 75B, isoform B"/>
    <property type="match status" value="1"/>
</dbReference>
<dbReference type="FunFam" id="3.30.50.10:FF:000013">
    <property type="entry name" value="Nuclear receptor subfamily 1 group D member 2"/>
    <property type="match status" value="1"/>
</dbReference>
<dbReference type="Gene3D" id="3.30.50.10">
    <property type="entry name" value="Erythroid Transcription Factor GATA-1, subunit A"/>
    <property type="match status" value="1"/>
</dbReference>
<dbReference type="Gene3D" id="1.10.565.10">
    <property type="entry name" value="Retinoid X Receptor"/>
    <property type="match status" value="1"/>
</dbReference>
<dbReference type="InterPro" id="IPR035500">
    <property type="entry name" value="NHR-like_dom_sf"/>
</dbReference>
<dbReference type="InterPro" id="IPR000536">
    <property type="entry name" value="Nucl_hrmn_rcpt_lig-bd"/>
</dbReference>
<dbReference type="InterPro" id="IPR050234">
    <property type="entry name" value="Nuclear_hormone_rcpt_NR1"/>
</dbReference>
<dbReference type="InterPro" id="IPR001723">
    <property type="entry name" value="Nuclear_hrmn_rcpt"/>
</dbReference>
<dbReference type="InterPro" id="IPR001728">
    <property type="entry name" value="ThyrH_rcpt"/>
</dbReference>
<dbReference type="InterPro" id="IPR001628">
    <property type="entry name" value="Znf_hrmn_rcpt"/>
</dbReference>
<dbReference type="InterPro" id="IPR013088">
    <property type="entry name" value="Znf_NHR/GATA"/>
</dbReference>
<dbReference type="PANTHER" id="PTHR24082:SF473">
    <property type="entry name" value="ECDYSONE-INDUCED PROTEIN 75B, ISOFORM B"/>
    <property type="match status" value="1"/>
</dbReference>
<dbReference type="PANTHER" id="PTHR24082">
    <property type="entry name" value="NUCLEAR HORMONE RECEPTOR"/>
    <property type="match status" value="1"/>
</dbReference>
<dbReference type="Pfam" id="PF00104">
    <property type="entry name" value="Hormone_recep"/>
    <property type="match status" value="1"/>
</dbReference>
<dbReference type="Pfam" id="PF00105">
    <property type="entry name" value="zf-C4"/>
    <property type="match status" value="1"/>
</dbReference>
<dbReference type="PRINTS" id="PR00398">
    <property type="entry name" value="STRDHORMONER"/>
</dbReference>
<dbReference type="PRINTS" id="PR00047">
    <property type="entry name" value="STROIDFINGER"/>
</dbReference>
<dbReference type="PRINTS" id="PR00546">
    <property type="entry name" value="THYROIDHORMR"/>
</dbReference>
<dbReference type="SMART" id="SM00430">
    <property type="entry name" value="HOLI"/>
    <property type="match status" value="1"/>
</dbReference>
<dbReference type="SMART" id="SM00399">
    <property type="entry name" value="ZnF_C4"/>
    <property type="match status" value="1"/>
</dbReference>
<dbReference type="SUPFAM" id="SSF57716">
    <property type="entry name" value="Glucocorticoid receptor-like (DNA-binding domain)"/>
    <property type="match status" value="1"/>
</dbReference>
<dbReference type="SUPFAM" id="SSF48508">
    <property type="entry name" value="Nuclear receptor ligand-binding domain"/>
    <property type="match status" value="1"/>
</dbReference>
<dbReference type="PROSITE" id="PS51843">
    <property type="entry name" value="NR_LBD"/>
    <property type="match status" value="1"/>
</dbReference>
<dbReference type="PROSITE" id="PS00031">
    <property type="entry name" value="NUCLEAR_REC_DBD_1"/>
    <property type="match status" value="1"/>
</dbReference>
<dbReference type="PROSITE" id="PS51030">
    <property type="entry name" value="NUCLEAR_REC_DBD_2"/>
    <property type="match status" value="1"/>
</dbReference>
<name>E75BB_DROME</name>
<keyword id="KW-0025">Alternative splicing</keyword>
<keyword id="KW-0217">Developmental protein</keyword>
<keyword id="KW-0238">DNA-binding</keyword>
<keyword id="KW-0479">Metal-binding</keyword>
<keyword id="KW-0539">Nucleus</keyword>
<keyword id="KW-0675">Receptor</keyword>
<keyword id="KW-1185">Reference proteome</keyword>
<keyword id="KW-0804">Transcription</keyword>
<keyword id="KW-0805">Transcription regulation</keyword>
<keyword id="KW-0862">Zinc</keyword>
<keyword id="KW-0863">Zinc-finger</keyword>
<reference key="1">
    <citation type="journal article" date="1989" name="Nucleic Acids Res.">
        <title>A member of the steroid hormone receptor gene family is expressed in the 20-OH-ecdysone inducible puff 75B in Drosophila melanogaster.</title>
        <authorList>
            <person name="Feigl G."/>
            <person name="Gram M."/>
            <person name="Pongs O."/>
        </authorList>
    </citation>
    <scope>NUCLEOTIDE SEQUENCE [MRNA]</scope>
    <scope>ALTERNATIVE SPLICING</scope>
    <source>
        <strain>Canton-S</strain>
        <tissue>Head</tissue>
    </source>
</reference>
<reference key="2">
    <citation type="journal article" date="2000" name="Science">
        <title>The genome sequence of Drosophila melanogaster.</title>
        <authorList>
            <person name="Adams M.D."/>
            <person name="Celniker S.E."/>
            <person name="Holt R.A."/>
            <person name="Evans C.A."/>
            <person name="Gocayne J.D."/>
            <person name="Amanatides P.G."/>
            <person name="Scherer S.E."/>
            <person name="Li P.W."/>
            <person name="Hoskins R.A."/>
            <person name="Galle R.F."/>
            <person name="George R.A."/>
            <person name="Lewis S.E."/>
            <person name="Richards S."/>
            <person name="Ashburner M."/>
            <person name="Henderson S.N."/>
            <person name="Sutton G.G."/>
            <person name="Wortman J.R."/>
            <person name="Yandell M.D."/>
            <person name="Zhang Q."/>
            <person name="Chen L.X."/>
            <person name="Brandon R.C."/>
            <person name="Rogers Y.-H.C."/>
            <person name="Blazej R.G."/>
            <person name="Champe M."/>
            <person name="Pfeiffer B.D."/>
            <person name="Wan K.H."/>
            <person name="Doyle C."/>
            <person name="Baxter E.G."/>
            <person name="Helt G."/>
            <person name="Nelson C.R."/>
            <person name="Miklos G.L.G."/>
            <person name="Abril J.F."/>
            <person name="Agbayani A."/>
            <person name="An H.-J."/>
            <person name="Andrews-Pfannkoch C."/>
            <person name="Baldwin D."/>
            <person name="Ballew R.M."/>
            <person name="Basu A."/>
            <person name="Baxendale J."/>
            <person name="Bayraktaroglu L."/>
            <person name="Beasley E.M."/>
            <person name="Beeson K.Y."/>
            <person name="Benos P.V."/>
            <person name="Berman B.P."/>
            <person name="Bhandari D."/>
            <person name="Bolshakov S."/>
            <person name="Borkova D."/>
            <person name="Botchan M.R."/>
            <person name="Bouck J."/>
            <person name="Brokstein P."/>
            <person name="Brottier P."/>
            <person name="Burtis K.C."/>
            <person name="Busam D.A."/>
            <person name="Butler H."/>
            <person name="Cadieu E."/>
            <person name="Center A."/>
            <person name="Chandra I."/>
            <person name="Cherry J.M."/>
            <person name="Cawley S."/>
            <person name="Dahlke C."/>
            <person name="Davenport L.B."/>
            <person name="Davies P."/>
            <person name="de Pablos B."/>
            <person name="Delcher A."/>
            <person name="Deng Z."/>
            <person name="Mays A.D."/>
            <person name="Dew I."/>
            <person name="Dietz S.M."/>
            <person name="Dodson K."/>
            <person name="Doup L.E."/>
            <person name="Downes M."/>
            <person name="Dugan-Rocha S."/>
            <person name="Dunkov B.C."/>
            <person name="Dunn P."/>
            <person name="Durbin K.J."/>
            <person name="Evangelista C.C."/>
            <person name="Ferraz C."/>
            <person name="Ferriera S."/>
            <person name="Fleischmann W."/>
            <person name="Fosler C."/>
            <person name="Gabrielian A.E."/>
            <person name="Garg N.S."/>
            <person name="Gelbart W.M."/>
            <person name="Glasser K."/>
            <person name="Glodek A."/>
            <person name="Gong F."/>
            <person name="Gorrell J.H."/>
            <person name="Gu Z."/>
            <person name="Guan P."/>
            <person name="Harris M."/>
            <person name="Harris N.L."/>
            <person name="Harvey D.A."/>
            <person name="Heiman T.J."/>
            <person name="Hernandez J.R."/>
            <person name="Houck J."/>
            <person name="Hostin D."/>
            <person name="Houston K.A."/>
            <person name="Howland T.J."/>
            <person name="Wei M.-H."/>
            <person name="Ibegwam C."/>
            <person name="Jalali M."/>
            <person name="Kalush F."/>
            <person name="Karpen G.H."/>
            <person name="Ke Z."/>
            <person name="Kennison J.A."/>
            <person name="Ketchum K.A."/>
            <person name="Kimmel B.E."/>
            <person name="Kodira C.D."/>
            <person name="Kraft C.L."/>
            <person name="Kravitz S."/>
            <person name="Kulp D."/>
            <person name="Lai Z."/>
            <person name="Lasko P."/>
            <person name="Lei Y."/>
            <person name="Levitsky A.A."/>
            <person name="Li J.H."/>
            <person name="Li Z."/>
            <person name="Liang Y."/>
            <person name="Lin X."/>
            <person name="Liu X."/>
            <person name="Mattei B."/>
            <person name="McIntosh T.C."/>
            <person name="McLeod M.P."/>
            <person name="McPherson D."/>
            <person name="Merkulov G."/>
            <person name="Milshina N.V."/>
            <person name="Mobarry C."/>
            <person name="Morris J."/>
            <person name="Moshrefi A."/>
            <person name="Mount S.M."/>
            <person name="Moy M."/>
            <person name="Murphy B."/>
            <person name="Murphy L."/>
            <person name="Muzny D.M."/>
            <person name="Nelson D.L."/>
            <person name="Nelson D.R."/>
            <person name="Nelson K.A."/>
            <person name="Nixon K."/>
            <person name="Nusskern D.R."/>
            <person name="Pacleb J.M."/>
            <person name="Palazzolo M."/>
            <person name="Pittman G.S."/>
            <person name="Pan S."/>
            <person name="Pollard J."/>
            <person name="Puri V."/>
            <person name="Reese M.G."/>
            <person name="Reinert K."/>
            <person name="Remington K."/>
            <person name="Saunders R.D.C."/>
            <person name="Scheeler F."/>
            <person name="Shen H."/>
            <person name="Shue B.C."/>
            <person name="Siden-Kiamos I."/>
            <person name="Simpson M."/>
            <person name="Skupski M.P."/>
            <person name="Smith T.J."/>
            <person name="Spier E."/>
            <person name="Spradling A.C."/>
            <person name="Stapleton M."/>
            <person name="Strong R."/>
            <person name="Sun E."/>
            <person name="Svirskas R."/>
            <person name="Tector C."/>
            <person name="Turner R."/>
            <person name="Venter E."/>
            <person name="Wang A.H."/>
            <person name="Wang X."/>
            <person name="Wang Z.-Y."/>
            <person name="Wassarman D.A."/>
            <person name="Weinstock G.M."/>
            <person name="Weissenbach J."/>
            <person name="Williams S.M."/>
            <person name="Woodage T."/>
            <person name="Worley K.C."/>
            <person name="Wu D."/>
            <person name="Yang S."/>
            <person name="Yao Q.A."/>
            <person name="Ye J."/>
            <person name="Yeh R.-F."/>
            <person name="Zaveri J.S."/>
            <person name="Zhan M."/>
            <person name="Zhang G."/>
            <person name="Zhao Q."/>
            <person name="Zheng L."/>
            <person name="Zheng X.H."/>
            <person name="Zhong F.N."/>
            <person name="Zhong W."/>
            <person name="Zhou X."/>
            <person name="Zhu S.C."/>
            <person name="Zhu X."/>
            <person name="Smith H.O."/>
            <person name="Gibbs R.A."/>
            <person name="Myers E.W."/>
            <person name="Rubin G.M."/>
            <person name="Venter J.C."/>
        </authorList>
    </citation>
    <scope>NUCLEOTIDE SEQUENCE [LARGE SCALE GENOMIC DNA]</scope>
    <source>
        <strain>Berkeley</strain>
    </source>
</reference>
<reference key="3">
    <citation type="journal article" date="2002" name="Genome Biol.">
        <title>Annotation of the Drosophila melanogaster euchromatic genome: a systematic review.</title>
        <authorList>
            <person name="Misra S."/>
            <person name="Crosby M.A."/>
            <person name="Mungall C.J."/>
            <person name="Matthews B.B."/>
            <person name="Campbell K.S."/>
            <person name="Hradecky P."/>
            <person name="Huang Y."/>
            <person name="Kaminker J.S."/>
            <person name="Millburn G.H."/>
            <person name="Prochnik S.E."/>
            <person name="Smith C.D."/>
            <person name="Tupy J.L."/>
            <person name="Whitfield E.J."/>
            <person name="Bayraktaroglu L."/>
            <person name="Berman B.P."/>
            <person name="Bettencourt B.R."/>
            <person name="Celniker S.E."/>
            <person name="de Grey A.D.N.J."/>
            <person name="Drysdale R.A."/>
            <person name="Harris N.L."/>
            <person name="Richter J."/>
            <person name="Russo S."/>
            <person name="Schroeder A.J."/>
            <person name="Shu S.Q."/>
            <person name="Stapleton M."/>
            <person name="Yamada C."/>
            <person name="Ashburner M."/>
            <person name="Gelbart W.M."/>
            <person name="Rubin G.M."/>
            <person name="Lewis S.E."/>
        </authorList>
    </citation>
    <scope>GENOME REANNOTATION</scope>
    <scope>ALTERNATIVE SPLICING</scope>
    <source>
        <strain>Berkeley</strain>
    </source>
</reference>
<reference key="4">
    <citation type="journal article" date="1993" name="Development">
        <title>Puffs and PCR: the in vivo dynamics of early gene expression during ecdysone responses in Drosophila.</title>
        <authorList>
            <person name="Huet F."/>
            <person name="Ruiz C."/>
            <person name="Richards G."/>
        </authorList>
    </citation>
    <scope>FUNCTION</scope>
    <scope>DEVELOPMENTAL STAGE</scope>
    <scope>INDUCTION</scope>
</reference>
<protein>
    <recommendedName>
        <fullName>Ecdysone-induced protein 75B, isoform B</fullName>
    </recommendedName>
    <alternativeName>
        <fullName>E75-C</fullName>
    </alternativeName>
    <alternativeName>
        <fullName>Nuclear receptor subfamily 1 group D member 3, isoform B</fullName>
    </alternativeName>
</protein>
<comment type="function">
    <text evidence="4">Implicated in the regulation of ecdysone-triggered gene hierarchies. Probably plays a key role in mediating the regulation of the larval molt by 20-OH-ecdysone.</text>
</comment>
<comment type="subcellular location">
    <subcellularLocation>
        <location evidence="1">Nucleus</location>
    </subcellularLocation>
</comment>
<comment type="alternative products">
    <event type="alternative splicing"/>
    <isoform>
        <id>P13055-2</id>
        <name>B</name>
        <name>E75C</name>
        <sequence type="displayed"/>
    </isoform>
    <isoform>
        <id>P17671-1</id>
        <name>C</name>
        <name>E75A</name>
        <sequence type="external"/>
    </isoform>
    <isoform>
        <id>P17672-1</id>
        <name>A</name>
        <name>E75B</name>
        <sequence type="external"/>
    </isoform>
    <isoform>
        <id>P17671-2</id>
        <name>D</name>
        <sequence type="external"/>
    </isoform>
</comment>
<comment type="developmental stage">
    <text evidence="4">In mid instar larvae salivary glands, levels increase during puff stage 1, then remain relatively constant until the premetamorphic pulse of ecdysone at puff stage 5. Levels increase again in late larvae at puff stages 9-10. At puff stage 1 expression is also seen in the gut. Levels are low in the gut, Malpighian tubules, fat body and wing disks between stages 1 and 11.</text>
</comment>
<comment type="induction">
    <text evidence="4">The expression of this protein is developmentally regulated and is correlated with the 20-OH-ecdysone induced activity of puff 75B.</text>
</comment>
<comment type="similarity">
    <text evidence="5">Belongs to the nuclear hormone receptor family. NR1 subfamily.</text>
</comment>
<comment type="sequence caution" evidence="5">
    <conflict type="frameshift">
        <sequence resource="EMBL-CDS" id="CAA33611"/>
    </conflict>
</comment>
<evidence type="ECO:0000255" key="1">
    <source>
        <dbReference type="PROSITE-ProRule" id="PRU00407"/>
    </source>
</evidence>
<evidence type="ECO:0000255" key="2">
    <source>
        <dbReference type="PROSITE-ProRule" id="PRU01189"/>
    </source>
</evidence>
<evidence type="ECO:0000256" key="3">
    <source>
        <dbReference type="SAM" id="MobiDB-lite"/>
    </source>
</evidence>
<evidence type="ECO:0000269" key="4">
    <source>
    </source>
</evidence>
<evidence type="ECO:0000305" key="5"/>
<accession>P13055</accession>
<accession>Q9VVM9</accession>
<sequence length="1412" mass="151292">MEAVQAAAAATSSGGSSGSVPGSGSGSASKLIKTEPIDFEMLHLEENERQQDIEREPSSSNSNSNSNSLTPQRYTHVQVQTVPPRQPTGLTTPGGTQKVILTPRVEYVQQRATSSTGGGMKHVYSQQQGTAASRSAPPETTALLTTTSGTPQIIITRTLPSNQHLSRRHSASPSALHHYQQQQPQRQQSPPPLHHQQQQQQQHVRVIRDGRLYDEATVVVAARRHSVSPPPLHHHSRSAPVSPVIARRGGAAAYMDQQYQQRQTPPLAPPPPPPPPPPPPPPPQQQQQQYISTGVPPPTAAARKFVVSTSTRHVNVIASNHFQQQQQQHQAQQHQQQHQQHQQHQQHVIASVSSSSSSSAIGSGGSSSSHIFRTPVVSSSSSSNMHHQQQQQQQQSSLGNSVMRPPPPPPPPKVKHASSSSSGNSSSSNTNNSSSSSNGEEPSSSIPDLEFDGTTVLCRVCGDKASGFHYGVHSCEGCKGFFRRSIQQKIQYRPCTKNQQCSILRINRNRCQYCRLKKCIAVGMSRDAVRFGRVPKREKARILAAMQQSTQNRGQQRALATELDDQPRLLAAVLRAHLETCEFTKEKVSAMRQRARDCPSYSMPTLLACPLNPAPELQSEQEFSQRFAHVIRGVIDFAGMIPGFQLLTQDDKFTLLKAGLFDALFVRLICMFDSSINSIICLNGQVMRRDAIQNGANARFLVDSTFNFAERMNSMNLTDAEIGLFCAIVLITPDRPGLRNLELIEKMYSRLKGCLQYIVAQNRPDQPEFLAKLLETMPDLRTLSTLHTEKLVVFRTEHKELLRQQMWSMEDGNNSDGQQNKSPSGSWADAMDVEAAKSPLGSVSSTESADLDYGSPSSSQPQGVSLPSPPQQQPSALASSAPLLAATLSGGCPLRNRANSGSSGDSGAAEMDIVGSHAHLTQNGLTITPIVRHQQQQQQQQQIGILNNAHSRNLNGGHAMCQQQQQHPQLHHHLTAGAARYRKLDSPTDSGIESGNEKNECKAVSSGGSSSCSSPRSSVDDALDCSDAAANHNQVVQHPQLSVVSVSPVRSPQPSTSSHLKRQIVEDMPVLKRVLQAPPLYDTNSLMDEAYKPHKKFRALRHREFETAEADASSSTSGSNSLSAGSPRQSPVPNSVATPPPSAASAAAGNPAQSQLHMHLTRSSPKASMASSHSVLAKSLMAEPRMTPEQMKRSDIIQNYLKRENSTAASSTTNGVGNRSPSSSSTPPPSAVQNQQRWGSSSVITTTCQQRQQSVSPHSNGSSSSSSSSSSSSSSSSSTSSNCSSSSASSCQYFQSPHSTSNGTSAPASSSSGSNSATPLLELQVDIADSAQPLNLSKKSPTPPPSKLHALVAAANAVQRYPTLSADVTVTASNGGPPSAAASPAPSSSPPASVGSPNPGLSAAVHKVMLEA</sequence>
<proteinExistence type="evidence at transcript level"/>
<feature type="chain" id="PRO_0000053505" description="Ecdysone-induced protein 75B, isoform B">
    <location>
        <begin position="1"/>
        <end position="1412"/>
    </location>
</feature>
<feature type="domain" description="NR LBD" evidence="2">
    <location>
        <begin position="565"/>
        <end position="813"/>
    </location>
</feature>
<feature type="DNA-binding region" description="Nuclear receptor" evidence="1">
    <location>
        <begin position="455"/>
        <end position="531"/>
    </location>
</feature>
<feature type="zinc finger region" description="NR C4-type" evidence="1">
    <location>
        <begin position="458"/>
        <end position="478"/>
    </location>
</feature>
<feature type="zinc finger region" description="NR C4-type" evidence="1">
    <location>
        <begin position="495"/>
        <end position="514"/>
    </location>
</feature>
<feature type="region of interest" description="Disordered" evidence="3">
    <location>
        <begin position="1"/>
        <end position="96"/>
    </location>
</feature>
<feature type="region of interest" description="Disordered" evidence="3">
    <location>
        <begin position="110"/>
        <end position="204"/>
    </location>
</feature>
<feature type="region of interest" description="Disordered" evidence="3">
    <location>
        <begin position="258"/>
        <end position="298"/>
    </location>
</feature>
<feature type="region of interest" description="Disordered" evidence="3">
    <location>
        <begin position="321"/>
        <end position="448"/>
    </location>
</feature>
<feature type="region of interest" description="Disordered" evidence="3">
    <location>
        <begin position="837"/>
        <end position="878"/>
    </location>
</feature>
<feature type="region of interest" description="Disordered" evidence="3">
    <location>
        <begin position="984"/>
        <end position="1021"/>
    </location>
</feature>
<feature type="region of interest" description="Disordered" evidence="3">
    <location>
        <begin position="1044"/>
        <end position="1064"/>
    </location>
</feature>
<feature type="region of interest" description="Disordered" evidence="3">
    <location>
        <begin position="1108"/>
        <end position="1174"/>
    </location>
</feature>
<feature type="region of interest" description="Disordered" evidence="3">
    <location>
        <begin position="1204"/>
        <end position="1317"/>
    </location>
</feature>
<feature type="region of interest" description="Disordered" evidence="3">
    <location>
        <begin position="1368"/>
        <end position="1401"/>
    </location>
</feature>
<feature type="compositionally biased region" description="Low complexity" evidence="3">
    <location>
        <begin position="1"/>
        <end position="14"/>
    </location>
</feature>
<feature type="compositionally biased region" description="Gly residues" evidence="3">
    <location>
        <begin position="15"/>
        <end position="25"/>
    </location>
</feature>
<feature type="compositionally biased region" description="Basic and acidic residues" evidence="3">
    <location>
        <begin position="32"/>
        <end position="57"/>
    </location>
</feature>
<feature type="compositionally biased region" description="Low complexity" evidence="3">
    <location>
        <begin position="58"/>
        <end position="68"/>
    </location>
</feature>
<feature type="compositionally biased region" description="Polar residues" evidence="3">
    <location>
        <begin position="69"/>
        <end position="81"/>
    </location>
</feature>
<feature type="compositionally biased region" description="Low complexity" evidence="3">
    <location>
        <begin position="87"/>
        <end position="96"/>
    </location>
</feature>
<feature type="compositionally biased region" description="Polar residues" evidence="3">
    <location>
        <begin position="124"/>
        <end position="133"/>
    </location>
</feature>
<feature type="compositionally biased region" description="Low complexity" evidence="3">
    <location>
        <begin position="135"/>
        <end position="150"/>
    </location>
</feature>
<feature type="compositionally biased region" description="Polar residues" evidence="3">
    <location>
        <begin position="151"/>
        <end position="164"/>
    </location>
</feature>
<feature type="compositionally biased region" description="Low complexity" evidence="3">
    <location>
        <begin position="177"/>
        <end position="203"/>
    </location>
</feature>
<feature type="compositionally biased region" description="Pro residues" evidence="3">
    <location>
        <begin position="266"/>
        <end position="284"/>
    </location>
</feature>
<feature type="compositionally biased region" description="Low complexity" evidence="3">
    <location>
        <begin position="323"/>
        <end position="371"/>
    </location>
</feature>
<feature type="compositionally biased region" description="Low complexity" evidence="3">
    <location>
        <begin position="378"/>
        <end position="403"/>
    </location>
</feature>
<feature type="compositionally biased region" description="Low complexity" evidence="3">
    <location>
        <begin position="417"/>
        <end position="447"/>
    </location>
</feature>
<feature type="compositionally biased region" description="Low complexity" evidence="3">
    <location>
        <begin position="854"/>
        <end position="866"/>
    </location>
</feature>
<feature type="compositionally biased region" description="Low complexity" evidence="3">
    <location>
        <begin position="1005"/>
        <end position="1017"/>
    </location>
</feature>
<feature type="compositionally biased region" description="Low complexity" evidence="3">
    <location>
        <begin position="1044"/>
        <end position="1058"/>
    </location>
</feature>
<feature type="compositionally biased region" description="Low complexity" evidence="3">
    <location>
        <begin position="1110"/>
        <end position="1155"/>
    </location>
</feature>
<feature type="compositionally biased region" description="Low complexity" evidence="3">
    <location>
        <begin position="1163"/>
        <end position="1174"/>
    </location>
</feature>
<feature type="compositionally biased region" description="Polar residues" evidence="3">
    <location>
        <begin position="1206"/>
        <end position="1219"/>
    </location>
</feature>
<feature type="compositionally biased region" description="Polar residues" evidence="3">
    <location>
        <begin position="1231"/>
        <end position="1253"/>
    </location>
</feature>
<feature type="compositionally biased region" description="Low complexity" evidence="3">
    <location>
        <begin position="1254"/>
        <end position="1290"/>
    </location>
</feature>
<feature type="compositionally biased region" description="Low complexity" evidence="3">
    <location>
        <begin position="1299"/>
        <end position="1317"/>
    </location>
</feature>
<feature type="compositionally biased region" description="Low complexity" evidence="3">
    <location>
        <begin position="1372"/>
        <end position="1400"/>
    </location>
</feature>
<feature type="sequence conflict" description="In Ref. 1; CAA33611." evidence="5" ref="1">
    <original>V</original>
    <variation>F</variation>
    <location>
        <position position="20"/>
    </location>
</feature>
<feature type="sequence conflict" description="In Ref. 1; CAA33611." evidence="5" ref="1">
    <original>Q</original>
    <variation>QQ</variation>
    <location>
        <position position="183"/>
    </location>
</feature>
<feature type="sequence conflict" description="In Ref. 1." evidence="5" ref="1">
    <location>
        <begin position="337"/>
        <end position="342"/>
    </location>
</feature>
<feature type="sequence conflict" description="In Ref. 1; CAA33611." evidence="5" ref="1">
    <original>S</original>
    <variation>V</variation>
    <location>
        <position position="1142"/>
    </location>
</feature>
<feature type="sequence conflict" description="In Ref. 1; CAA33611." evidence="5" ref="1">
    <original>V</original>
    <variation>L</variation>
    <location>
        <position position="1216"/>
    </location>
</feature>
<feature type="sequence conflict" description="In Ref. 1; CAA33611." evidence="5" ref="1">
    <location>
        <position position="1231"/>
    </location>
</feature>
<feature type="sequence conflict" description="In Ref. 1; CAA33611." evidence="5" ref="1">
    <original>N</original>
    <variation>I</variation>
    <location>
        <position position="1302"/>
    </location>
</feature>
<organism>
    <name type="scientific">Drosophila melanogaster</name>
    <name type="common">Fruit fly</name>
    <dbReference type="NCBI Taxonomy" id="7227"/>
    <lineage>
        <taxon>Eukaryota</taxon>
        <taxon>Metazoa</taxon>
        <taxon>Ecdysozoa</taxon>
        <taxon>Arthropoda</taxon>
        <taxon>Hexapoda</taxon>
        <taxon>Insecta</taxon>
        <taxon>Pterygota</taxon>
        <taxon>Neoptera</taxon>
        <taxon>Endopterygota</taxon>
        <taxon>Diptera</taxon>
        <taxon>Brachycera</taxon>
        <taxon>Muscomorpha</taxon>
        <taxon>Ephydroidea</taxon>
        <taxon>Drosophilidae</taxon>
        <taxon>Drosophila</taxon>
        <taxon>Sophophora</taxon>
    </lineage>
</organism>
<gene>
    <name type="primary">Eip75B</name>
    <name type="synonym">NR1D3</name>
    <name type="ORF">CG8127</name>
</gene>